<accession>Q2RM63</accession>
<name>HCP_MOOTA</name>
<proteinExistence type="inferred from homology"/>
<evidence type="ECO:0000255" key="1">
    <source>
        <dbReference type="HAMAP-Rule" id="MF_00069"/>
    </source>
</evidence>
<sequence>MFCYQCEQTAGGSGCTRVGVCGKNEDIASLQDTIIIGLKGIAAYAYHAGELGARDPEVDAFMHEALFTTLTNVDFDLNRHIETALKVGAMNLRVMELLDRAHVERFGAPEPTKVSTGTKAGPGILVTGHDLLDLYELLRQTEGTGINVYTHGEMLPAHAYPELKKFPHLVGNYGSAWQNQKKEFEDFPGAILGTTNCVLIPKESYRERMFTCGIAGLPGVTHIKNRDFTPVIEKAKSLPPLEEKAGGELTTGFHHQAVLKLAGQIIDAVKAGKIRHFFLVGGCDGAKPGRNYYTEFVEKVPKDCVVLTLGCGKYRFNHLDLGDIDGIPRLLDMGQCNNAYSALQVALALADAFKCSVNELPLSLVLSWFEQKAVAILLTLLHLGVRNIRIGPSLPAFLTPGVLKVLQEKYNLKPITTPEQDLKEILG</sequence>
<keyword id="KW-0004">4Fe-4S</keyword>
<keyword id="KW-0963">Cytoplasm</keyword>
<keyword id="KW-0408">Iron</keyword>
<keyword id="KW-0411">Iron-sulfur</keyword>
<keyword id="KW-0479">Metal-binding</keyword>
<keyword id="KW-0560">Oxidoreductase</keyword>
<reference key="1">
    <citation type="journal article" date="2008" name="Environ. Microbiol.">
        <title>The complete genome sequence of Moorella thermoacetica (f. Clostridium thermoaceticum).</title>
        <authorList>
            <person name="Pierce E."/>
            <person name="Xie G."/>
            <person name="Barabote R.D."/>
            <person name="Saunders E."/>
            <person name="Han C.S."/>
            <person name="Detter J.C."/>
            <person name="Richardson P."/>
            <person name="Brettin T.S."/>
            <person name="Das A."/>
            <person name="Ljungdahl L.G."/>
            <person name="Ragsdale S.W."/>
        </authorList>
    </citation>
    <scope>NUCLEOTIDE SEQUENCE [LARGE SCALE GENOMIC DNA]</scope>
    <source>
        <strain>ATCC 39073 / JCM 9320</strain>
    </source>
</reference>
<feature type="chain" id="PRO_1000009157" description="Hydroxylamine reductase">
    <location>
        <begin position="1"/>
        <end position="427"/>
    </location>
</feature>
<feature type="binding site" evidence="1">
    <location>
        <position position="3"/>
    </location>
    <ligand>
        <name>[4Fe-4S] cluster</name>
        <dbReference type="ChEBI" id="CHEBI:49883"/>
    </ligand>
</feature>
<feature type="binding site" evidence="1">
    <location>
        <position position="6"/>
    </location>
    <ligand>
        <name>[4Fe-4S] cluster</name>
        <dbReference type="ChEBI" id="CHEBI:49883"/>
    </ligand>
</feature>
<feature type="binding site" evidence="1">
    <location>
        <position position="15"/>
    </location>
    <ligand>
        <name>[4Fe-4S] cluster</name>
        <dbReference type="ChEBI" id="CHEBI:49883"/>
    </ligand>
</feature>
<feature type="binding site" evidence="1">
    <location>
        <position position="21"/>
    </location>
    <ligand>
        <name>[4Fe-4S] cluster</name>
        <dbReference type="ChEBI" id="CHEBI:49883"/>
    </ligand>
</feature>
<feature type="binding site" evidence="1">
    <location>
        <position position="129"/>
    </location>
    <ligand>
        <name>hybrid [4Fe-2O-2S] cluster</name>
        <dbReference type="ChEBI" id="CHEBI:60519"/>
    </ligand>
</feature>
<feature type="binding site" evidence="1">
    <location>
        <position position="153"/>
    </location>
    <ligand>
        <name>hybrid [4Fe-2O-2S] cluster</name>
        <dbReference type="ChEBI" id="CHEBI:60519"/>
    </ligand>
</feature>
<feature type="binding site" evidence="1">
    <location>
        <position position="197"/>
    </location>
    <ligand>
        <name>hybrid [4Fe-2O-2S] cluster</name>
        <dbReference type="ChEBI" id="CHEBI:60519"/>
    </ligand>
</feature>
<feature type="binding site" description="via persulfide group" evidence="1">
    <location>
        <position position="283"/>
    </location>
    <ligand>
        <name>hybrid [4Fe-2O-2S] cluster</name>
        <dbReference type="ChEBI" id="CHEBI:60519"/>
    </ligand>
</feature>
<feature type="binding site" evidence="1">
    <location>
        <position position="311"/>
    </location>
    <ligand>
        <name>hybrid [4Fe-2O-2S] cluster</name>
        <dbReference type="ChEBI" id="CHEBI:60519"/>
    </ligand>
</feature>
<feature type="binding site" evidence="1">
    <location>
        <position position="336"/>
    </location>
    <ligand>
        <name>hybrid [4Fe-2O-2S] cluster</name>
        <dbReference type="ChEBI" id="CHEBI:60519"/>
    </ligand>
</feature>
<feature type="binding site" evidence="1">
    <location>
        <position position="370"/>
    </location>
    <ligand>
        <name>hybrid [4Fe-2O-2S] cluster</name>
        <dbReference type="ChEBI" id="CHEBI:60519"/>
    </ligand>
</feature>
<feature type="binding site" evidence="1">
    <location>
        <position position="372"/>
    </location>
    <ligand>
        <name>hybrid [4Fe-2O-2S] cluster</name>
        <dbReference type="ChEBI" id="CHEBI:60519"/>
    </ligand>
</feature>
<feature type="modified residue" description="Cysteine persulfide" evidence="1">
    <location>
        <position position="283"/>
    </location>
</feature>
<gene>
    <name evidence="1" type="primary">hcp</name>
    <name type="ordered locus">Moth_0137</name>
</gene>
<protein>
    <recommendedName>
        <fullName evidence="1">Hydroxylamine reductase</fullName>
        <ecNumber evidence="1">1.7.99.1</ecNumber>
    </recommendedName>
    <alternativeName>
        <fullName evidence="1">Hybrid-cluster protein</fullName>
        <shortName evidence="1">HCP</shortName>
    </alternativeName>
    <alternativeName>
        <fullName evidence="1">Prismane protein</fullName>
    </alternativeName>
</protein>
<organism>
    <name type="scientific">Moorella thermoacetica (strain ATCC 39073 / JCM 9320)</name>
    <dbReference type="NCBI Taxonomy" id="264732"/>
    <lineage>
        <taxon>Bacteria</taxon>
        <taxon>Bacillati</taxon>
        <taxon>Bacillota</taxon>
        <taxon>Clostridia</taxon>
        <taxon>Moorellales</taxon>
        <taxon>Moorellaceae</taxon>
        <taxon>Moorella</taxon>
    </lineage>
</organism>
<dbReference type="EC" id="1.7.99.1" evidence="1"/>
<dbReference type="EMBL" id="CP000232">
    <property type="protein sequence ID" value="ABC18476.1"/>
    <property type="molecule type" value="Genomic_DNA"/>
</dbReference>
<dbReference type="RefSeq" id="YP_429019.1">
    <property type="nucleotide sequence ID" value="NC_007644.1"/>
</dbReference>
<dbReference type="SMR" id="Q2RM63"/>
<dbReference type="STRING" id="264732.Moth_0137"/>
<dbReference type="EnsemblBacteria" id="ABC18476">
    <property type="protein sequence ID" value="ABC18476"/>
    <property type="gene ID" value="Moth_0137"/>
</dbReference>
<dbReference type="KEGG" id="mta:Moth_0137"/>
<dbReference type="PATRIC" id="fig|264732.11.peg.142"/>
<dbReference type="eggNOG" id="COG1151">
    <property type="taxonomic scope" value="Bacteria"/>
</dbReference>
<dbReference type="HOGENOM" id="CLU_038344_0_0_9"/>
<dbReference type="OrthoDB" id="9761526at2"/>
<dbReference type="GO" id="GO:0005737">
    <property type="term" value="C:cytoplasm"/>
    <property type="evidence" value="ECO:0007669"/>
    <property type="project" value="UniProtKB-SubCell"/>
</dbReference>
<dbReference type="GO" id="GO:0051539">
    <property type="term" value="F:4 iron, 4 sulfur cluster binding"/>
    <property type="evidence" value="ECO:0007669"/>
    <property type="project" value="UniProtKB-KW"/>
</dbReference>
<dbReference type="GO" id="GO:0050418">
    <property type="term" value="F:hydroxylamine reductase activity"/>
    <property type="evidence" value="ECO:0007669"/>
    <property type="project" value="UniProtKB-UniRule"/>
</dbReference>
<dbReference type="GO" id="GO:0046872">
    <property type="term" value="F:metal ion binding"/>
    <property type="evidence" value="ECO:0007669"/>
    <property type="project" value="UniProtKB-KW"/>
</dbReference>
<dbReference type="GO" id="GO:0004601">
    <property type="term" value="F:peroxidase activity"/>
    <property type="evidence" value="ECO:0007669"/>
    <property type="project" value="TreeGrafter"/>
</dbReference>
<dbReference type="GO" id="GO:0042542">
    <property type="term" value="P:response to hydrogen peroxide"/>
    <property type="evidence" value="ECO:0007669"/>
    <property type="project" value="TreeGrafter"/>
</dbReference>
<dbReference type="CDD" id="cd01914">
    <property type="entry name" value="HCP"/>
    <property type="match status" value="1"/>
</dbReference>
<dbReference type="FunFam" id="3.40.50.2030:FF:000001">
    <property type="entry name" value="Hydroxylamine reductase"/>
    <property type="match status" value="1"/>
</dbReference>
<dbReference type="FunFam" id="3.40.50.2030:FF:000002">
    <property type="entry name" value="Hydroxylamine reductase"/>
    <property type="match status" value="1"/>
</dbReference>
<dbReference type="Gene3D" id="1.20.1270.20">
    <property type="match status" value="1"/>
</dbReference>
<dbReference type="Gene3D" id="3.40.50.2030">
    <property type="match status" value="2"/>
</dbReference>
<dbReference type="HAMAP" id="MF_00069">
    <property type="entry name" value="Hydroxylam_reduct"/>
    <property type="match status" value="1"/>
</dbReference>
<dbReference type="InterPro" id="IPR004137">
    <property type="entry name" value="HCP/CODH"/>
</dbReference>
<dbReference type="InterPro" id="IPR010048">
    <property type="entry name" value="Hydroxylam_reduct"/>
</dbReference>
<dbReference type="InterPro" id="IPR016099">
    <property type="entry name" value="Prismane-like_a/b-sand"/>
</dbReference>
<dbReference type="InterPro" id="IPR011254">
    <property type="entry name" value="Prismane-like_sf"/>
</dbReference>
<dbReference type="InterPro" id="IPR016100">
    <property type="entry name" value="Prismane_a-bundle"/>
</dbReference>
<dbReference type="NCBIfam" id="TIGR01703">
    <property type="entry name" value="hybrid_clust"/>
    <property type="match status" value="1"/>
</dbReference>
<dbReference type="NCBIfam" id="NF003658">
    <property type="entry name" value="PRK05290.1"/>
    <property type="match status" value="1"/>
</dbReference>
<dbReference type="PANTHER" id="PTHR30109">
    <property type="entry name" value="HYDROXYLAMINE REDUCTASE"/>
    <property type="match status" value="1"/>
</dbReference>
<dbReference type="PANTHER" id="PTHR30109:SF0">
    <property type="entry name" value="HYDROXYLAMINE REDUCTASE"/>
    <property type="match status" value="1"/>
</dbReference>
<dbReference type="Pfam" id="PF03063">
    <property type="entry name" value="Prismane"/>
    <property type="match status" value="2"/>
</dbReference>
<dbReference type="SUPFAM" id="SSF56821">
    <property type="entry name" value="Prismane protein-like"/>
    <property type="match status" value="1"/>
</dbReference>
<comment type="function">
    <text evidence="1">Catalyzes the reduction of hydroxylamine to form NH(3) and H(2)O.</text>
</comment>
<comment type="catalytic activity">
    <reaction evidence="1">
        <text>A + NH4(+) + H2O = hydroxylamine + AH2 + H(+)</text>
        <dbReference type="Rhea" id="RHEA:22052"/>
        <dbReference type="ChEBI" id="CHEBI:13193"/>
        <dbReference type="ChEBI" id="CHEBI:15377"/>
        <dbReference type="ChEBI" id="CHEBI:15378"/>
        <dbReference type="ChEBI" id="CHEBI:15429"/>
        <dbReference type="ChEBI" id="CHEBI:17499"/>
        <dbReference type="ChEBI" id="CHEBI:28938"/>
        <dbReference type="EC" id="1.7.99.1"/>
    </reaction>
</comment>
<comment type="cofactor">
    <cofactor evidence="1">
        <name>[4Fe-4S] cluster</name>
        <dbReference type="ChEBI" id="CHEBI:49883"/>
    </cofactor>
    <text evidence="1">Binds 1 [4Fe-4S] cluster.</text>
</comment>
<comment type="cofactor">
    <cofactor evidence="1">
        <name>hybrid [4Fe-2O-2S] cluster</name>
        <dbReference type="ChEBI" id="CHEBI:60519"/>
    </cofactor>
    <text evidence="1">Binds 1 hybrid [4Fe-2O-2S] cluster.</text>
</comment>
<comment type="subcellular location">
    <subcellularLocation>
        <location evidence="1">Cytoplasm</location>
    </subcellularLocation>
</comment>
<comment type="similarity">
    <text evidence="1">Belongs to the HCP family.</text>
</comment>